<name>YKX1_SCHPO</name>
<reference key="1">
    <citation type="journal article" date="2002" name="Nature">
        <title>The genome sequence of Schizosaccharomyces pombe.</title>
        <authorList>
            <person name="Wood V."/>
            <person name="Gwilliam R."/>
            <person name="Rajandream M.A."/>
            <person name="Lyne M.H."/>
            <person name="Lyne R."/>
            <person name="Stewart A."/>
            <person name="Sgouros J.G."/>
            <person name="Peat N."/>
            <person name="Hayles J."/>
            <person name="Baker S.G."/>
            <person name="Basham D."/>
            <person name="Bowman S."/>
            <person name="Brooks K."/>
            <person name="Brown D."/>
            <person name="Brown S."/>
            <person name="Chillingworth T."/>
            <person name="Churcher C.M."/>
            <person name="Collins M."/>
            <person name="Connor R."/>
            <person name="Cronin A."/>
            <person name="Davis P."/>
            <person name="Feltwell T."/>
            <person name="Fraser A."/>
            <person name="Gentles S."/>
            <person name="Goble A."/>
            <person name="Hamlin N."/>
            <person name="Harris D.E."/>
            <person name="Hidalgo J."/>
            <person name="Hodgson G."/>
            <person name="Holroyd S."/>
            <person name="Hornsby T."/>
            <person name="Howarth S."/>
            <person name="Huckle E.J."/>
            <person name="Hunt S."/>
            <person name="Jagels K."/>
            <person name="James K.D."/>
            <person name="Jones L."/>
            <person name="Jones M."/>
            <person name="Leather S."/>
            <person name="McDonald S."/>
            <person name="McLean J."/>
            <person name="Mooney P."/>
            <person name="Moule S."/>
            <person name="Mungall K.L."/>
            <person name="Murphy L.D."/>
            <person name="Niblett D."/>
            <person name="Odell C."/>
            <person name="Oliver K."/>
            <person name="O'Neil S."/>
            <person name="Pearson D."/>
            <person name="Quail M.A."/>
            <person name="Rabbinowitsch E."/>
            <person name="Rutherford K.M."/>
            <person name="Rutter S."/>
            <person name="Saunders D."/>
            <person name="Seeger K."/>
            <person name="Sharp S."/>
            <person name="Skelton J."/>
            <person name="Simmonds M.N."/>
            <person name="Squares R."/>
            <person name="Squares S."/>
            <person name="Stevens K."/>
            <person name="Taylor K."/>
            <person name="Taylor R.G."/>
            <person name="Tivey A."/>
            <person name="Walsh S.V."/>
            <person name="Warren T."/>
            <person name="Whitehead S."/>
            <person name="Woodward J.R."/>
            <person name="Volckaert G."/>
            <person name="Aert R."/>
            <person name="Robben J."/>
            <person name="Grymonprez B."/>
            <person name="Weltjens I."/>
            <person name="Vanstreels E."/>
            <person name="Rieger M."/>
            <person name="Schaefer M."/>
            <person name="Mueller-Auer S."/>
            <person name="Gabel C."/>
            <person name="Fuchs M."/>
            <person name="Duesterhoeft A."/>
            <person name="Fritzc C."/>
            <person name="Holzer E."/>
            <person name="Moestl D."/>
            <person name="Hilbert H."/>
            <person name="Borzym K."/>
            <person name="Langer I."/>
            <person name="Beck A."/>
            <person name="Lehrach H."/>
            <person name="Reinhardt R."/>
            <person name="Pohl T.M."/>
            <person name="Eger P."/>
            <person name="Zimmermann W."/>
            <person name="Wedler H."/>
            <person name="Wambutt R."/>
            <person name="Purnelle B."/>
            <person name="Goffeau A."/>
            <person name="Cadieu E."/>
            <person name="Dreano S."/>
            <person name="Gloux S."/>
            <person name="Lelaure V."/>
            <person name="Mottier S."/>
            <person name="Galibert F."/>
            <person name="Aves S.J."/>
            <person name="Xiang Z."/>
            <person name="Hunt C."/>
            <person name="Moore K."/>
            <person name="Hurst S.M."/>
            <person name="Lucas M."/>
            <person name="Rochet M."/>
            <person name="Gaillardin C."/>
            <person name="Tallada V.A."/>
            <person name="Garzon A."/>
            <person name="Thode G."/>
            <person name="Daga R.R."/>
            <person name="Cruzado L."/>
            <person name="Jimenez J."/>
            <person name="Sanchez M."/>
            <person name="del Rey F."/>
            <person name="Benito J."/>
            <person name="Dominguez A."/>
            <person name="Revuelta J.L."/>
            <person name="Moreno S."/>
            <person name="Armstrong J."/>
            <person name="Forsburg S.L."/>
            <person name="Cerutti L."/>
            <person name="Lowe T."/>
            <person name="McCombie W.R."/>
            <person name="Paulsen I."/>
            <person name="Potashkin J."/>
            <person name="Shpakovski G.V."/>
            <person name="Ussery D."/>
            <person name="Barrell B.G."/>
            <person name="Nurse P."/>
        </authorList>
    </citation>
    <scope>NUCLEOTIDE SEQUENCE [LARGE SCALE GENOMIC DNA]</scope>
    <source>
        <strain>972 / ATCC 24843</strain>
    </source>
</reference>
<reference key="2">
    <citation type="journal article" date="1994" name="Jpn. J. Genet.">
        <title>Molecular cloning and characterization of a fission yeast gene responsible for supersensitivity to the spindle poison, isopropyl N-3-chlorophenyl carbamate.</title>
        <authorList>
            <person name="Ishiguro J."/>
            <person name="Uhara Y."/>
            <person name="Kawahara K."/>
        </authorList>
    </citation>
    <scope>NUCLEOTIDE SEQUENCE [GENOMIC DNA] OF 1170-1234</scope>
    <source>
        <strain>972 / ATCC 24843</strain>
    </source>
</reference>
<protein>
    <recommendedName>
        <fullName>Uncharacterized protein C328.01c</fullName>
    </recommendedName>
</protein>
<accession>O14116</accession>
<accession>Q9P3U5</accession>
<accession>Q9URK5</accession>
<dbReference type="EMBL" id="CU329670">
    <property type="protein sequence ID" value="CAB16390.2"/>
    <property type="molecule type" value="Genomic_DNA"/>
</dbReference>
<dbReference type="EMBL" id="AB017490">
    <property type="protein sequence ID" value="BAA33048.1"/>
    <property type="molecule type" value="Genomic_DNA"/>
</dbReference>
<dbReference type="RefSeq" id="NP_594202.2">
    <property type="nucleotide sequence ID" value="NM_001019626.2"/>
</dbReference>
<dbReference type="SMR" id="O14116"/>
<dbReference type="BioGRID" id="279047">
    <property type="interactions" value="56"/>
</dbReference>
<dbReference type="FunCoup" id="O14116">
    <property type="interactions" value="850"/>
</dbReference>
<dbReference type="STRING" id="284812.O14116"/>
<dbReference type="iPTMnet" id="O14116"/>
<dbReference type="PaxDb" id="4896-SPAC328.01c.1"/>
<dbReference type="EnsemblFungi" id="SPAC328.01c.1">
    <property type="protein sequence ID" value="SPAC328.01c.1:pep"/>
    <property type="gene ID" value="SPAC328.01c"/>
</dbReference>
<dbReference type="GeneID" id="2542592"/>
<dbReference type="KEGG" id="spo:2542592"/>
<dbReference type="PomBase" id="SPAC328.01c"/>
<dbReference type="VEuPathDB" id="FungiDB:SPAC328.01c"/>
<dbReference type="eggNOG" id="KOG2020">
    <property type="taxonomic scope" value="Eukaryota"/>
</dbReference>
<dbReference type="HOGENOM" id="CLU_267475_0_0_1"/>
<dbReference type="InParanoid" id="O14116"/>
<dbReference type="OMA" id="IAKRSWG"/>
<dbReference type="PhylomeDB" id="O14116"/>
<dbReference type="PRO" id="PR:O14116"/>
<dbReference type="Proteomes" id="UP000002485">
    <property type="component" value="Chromosome I"/>
</dbReference>
<dbReference type="GO" id="GO:0005737">
    <property type="term" value="C:cytoplasm"/>
    <property type="evidence" value="ECO:0000318"/>
    <property type="project" value="GO_Central"/>
</dbReference>
<dbReference type="GO" id="GO:0005829">
    <property type="term" value="C:cytosol"/>
    <property type="evidence" value="ECO:0007005"/>
    <property type="project" value="PomBase"/>
</dbReference>
<dbReference type="GO" id="GO:0005635">
    <property type="term" value="C:nuclear envelope"/>
    <property type="evidence" value="ECO:0007005"/>
    <property type="project" value="PomBase"/>
</dbReference>
<dbReference type="GO" id="GO:0005634">
    <property type="term" value="C:nucleus"/>
    <property type="evidence" value="ECO:0007005"/>
    <property type="project" value="PomBase"/>
</dbReference>
<dbReference type="GO" id="GO:0042565">
    <property type="term" value="C:RNA nuclear export complex"/>
    <property type="evidence" value="ECO:0000318"/>
    <property type="project" value="GO_Central"/>
</dbReference>
<dbReference type="GO" id="GO:0005525">
    <property type="term" value="F:GTP binding"/>
    <property type="evidence" value="ECO:0000303"/>
    <property type="project" value="PomBase"/>
</dbReference>
<dbReference type="GO" id="GO:0005049">
    <property type="term" value="F:nuclear export signal receptor activity"/>
    <property type="evidence" value="ECO:0000318"/>
    <property type="project" value="GO_Central"/>
</dbReference>
<dbReference type="GO" id="GO:0061608">
    <property type="term" value="F:nuclear import signal receptor activity"/>
    <property type="evidence" value="ECO:0000266"/>
    <property type="project" value="PomBase"/>
</dbReference>
<dbReference type="GO" id="GO:0003723">
    <property type="term" value="F:RNA binding"/>
    <property type="evidence" value="ECO:0000318"/>
    <property type="project" value="GO_Central"/>
</dbReference>
<dbReference type="GO" id="GO:0006611">
    <property type="term" value="P:protein export from nucleus"/>
    <property type="evidence" value="ECO:0000266"/>
    <property type="project" value="PomBase"/>
</dbReference>
<dbReference type="GO" id="GO:0006405">
    <property type="term" value="P:RNA export from nucleus"/>
    <property type="evidence" value="ECO:0000318"/>
    <property type="project" value="GO_Central"/>
</dbReference>
<dbReference type="FunFam" id="1.25.10.10:FF:000375">
    <property type="entry name" value="Predicted protein"/>
    <property type="match status" value="1"/>
</dbReference>
<dbReference type="Gene3D" id="1.25.10.10">
    <property type="entry name" value="Leucine-rich Repeat Variant"/>
    <property type="match status" value="1"/>
</dbReference>
<dbReference type="InterPro" id="IPR011989">
    <property type="entry name" value="ARM-like"/>
</dbReference>
<dbReference type="InterPro" id="IPR016024">
    <property type="entry name" value="ARM-type_fold"/>
</dbReference>
<dbReference type="InterPro" id="IPR013598">
    <property type="entry name" value="Exportin-1/Importin-b-like"/>
</dbReference>
<dbReference type="InterPro" id="IPR045478">
    <property type="entry name" value="Exportin-5_C"/>
</dbReference>
<dbReference type="InterPro" id="IPR045065">
    <property type="entry name" value="XPO1/5"/>
</dbReference>
<dbReference type="PANTHER" id="PTHR11223">
    <property type="entry name" value="EXPORTIN 1/5"/>
    <property type="match status" value="1"/>
</dbReference>
<dbReference type="PANTHER" id="PTHR11223:SF3">
    <property type="entry name" value="EXPORTIN-5"/>
    <property type="match status" value="1"/>
</dbReference>
<dbReference type="Pfam" id="PF19273">
    <property type="entry name" value="Exportin-5"/>
    <property type="match status" value="1"/>
</dbReference>
<dbReference type="Pfam" id="PF08389">
    <property type="entry name" value="Xpo1"/>
    <property type="match status" value="1"/>
</dbReference>
<dbReference type="SUPFAM" id="SSF48371">
    <property type="entry name" value="ARM repeat"/>
    <property type="match status" value="1"/>
</dbReference>
<keyword id="KW-1185">Reference proteome</keyword>
<sequence>MDEKGLSNILQALNVVHSPESSRETRFSAQQLLDELKDSYSSPSVAIQLLELNEQAFSSLGCKLDIHIVQHFSLSLFETSVGMNWKSFSNKEKESVTSFLCKISLEDNNLLSVHFVRSKLASVFIEIAKRDWYNTWREEFDSFLQSLWSLSLQHRQLSSLILRGIMEDLYQYDDPVASLRSHILFNALISILSSSSTLHKLYPSGLPYSVTIPSNNEGWLIRWGNALESQDDALECLKCFKSCLSWVATDSIREANIVSHICQILVQGPIFLKTHAIDCIYICVTRTMEIDDPLWEIVEEMLSPSSLYTLHQVYTATSESINIKTLSSTTPEYILLKKLSETIVALGQYNYLDSNRRKCIKLTSLDTYSLLVLEIMKHPSLLISAISQHFWVLALRDPIISKHEKFQIVYPELLSIASERLLRFEDAVVELIPESATAKYLQEDVEGVSAVHSFCGNFRRFMFDIVRLTVSITPIESLNWIQNRFQSTVLGNMEDIQSQTEFFSKTSPLYLTMDVGFSTIEAFLHGVTRWNENTSDDPATYEIILQNLFLWCKQLVEINFKDPMLITRLISVLVLFTSILARENTTLLGVVLEKIISAVTYDNTSASYGFSDVQKINEMRSRCCFELVRLGELMPNPLMNIFDQLQSIIDQLDNATTLTGSEIVMLKTFLFVITQFSDVNIEVKNEYFEKLVGPVVKTWLDVQPPVNSPMEFLNHIGFPQMAEYLSAKYPYNADYTQFELDADAASYQSNLETGRKWLWPIKCLGRFCEATCSNKHIHPSEFEGQKNLWQVILPNVVPNLLKLVEQLHCCYEPSFISGLGMHNSSILQKSIVERFWLHGVSQISKNQFLEESYKMDVSANKLIHSFGHFLRRLREYCYYAIASFMRLGQAFFCVPGLSKQFLTAFFSHAAGLSLHQWTSMVNVVIKPYCVNCPAELRDECLLPLLPALLSELDHKLVSEWRRINDRGLLVEEDAEETGEDDDLSEEMIEESLLRHLTYATAKLITETFLQITPTQSRSNVSSSLIGKETVEGPVKLSEYVLDNAIICEPLLCTLCHLLVIHDSRTVGLVVNAFLAITPLLVSEQAHSLVREFICQQVFQSVILAIHDPYFESMQSDFIRLACIILSYSQGITDSAFQLLASIPALANQENLVPAFFNKFREASTLKIQKALLTRLLNSGRIVPRTDRRAVNAAILDVSAKEMLKRFEKSVSLQDEQKNDVLSRDEDTGLANLFE</sequence>
<gene>
    <name type="ORF">SPAC328.01c</name>
    <name type="ORF">SPAC3A11.01</name>
</gene>
<proteinExistence type="predicted"/>
<feature type="chain" id="PRO_0000116834" description="Uncharacterized protein C328.01c">
    <location>
        <begin position="1"/>
        <end position="1234"/>
    </location>
</feature>
<organism>
    <name type="scientific">Schizosaccharomyces pombe (strain 972 / ATCC 24843)</name>
    <name type="common">Fission yeast</name>
    <dbReference type="NCBI Taxonomy" id="284812"/>
    <lineage>
        <taxon>Eukaryota</taxon>
        <taxon>Fungi</taxon>
        <taxon>Dikarya</taxon>
        <taxon>Ascomycota</taxon>
        <taxon>Taphrinomycotina</taxon>
        <taxon>Schizosaccharomycetes</taxon>
        <taxon>Schizosaccharomycetales</taxon>
        <taxon>Schizosaccharomycetaceae</taxon>
        <taxon>Schizosaccharomyces</taxon>
    </lineage>
</organism>